<name>CDPK4_ORYSJ</name>
<keyword id="KW-0025">Alternative splicing</keyword>
<keyword id="KW-0067">ATP-binding</keyword>
<keyword id="KW-0106">Calcium</keyword>
<keyword id="KW-0418">Kinase</keyword>
<keyword id="KW-0449">Lipoprotein</keyword>
<keyword id="KW-0472">Membrane</keyword>
<keyword id="KW-0479">Metal-binding</keyword>
<keyword id="KW-0519">Myristate</keyword>
<keyword id="KW-0547">Nucleotide-binding</keyword>
<keyword id="KW-1185">Reference proteome</keyword>
<keyword id="KW-0677">Repeat</keyword>
<keyword id="KW-0723">Serine/threonine-protein kinase</keyword>
<keyword id="KW-0808">Transferase</keyword>
<sequence>MGACFSSHTATAAADGGSGKRQQRKGDHKGKLPDGGGGEKEKEAARVEFGYERDFEGRYQVGRLLGHGQFGYTFAATDRASGDRVAVKRIDKAKMVRPVAVEDVKREVKILKELKGHENIVHFYNAFEDDSYVYIVMELCEGGELLDRILAKKNSRYSEKDAAVVVRQMLKVAAECHLHGLVHRDMKPENFLFKSTKEDSPLKATDFGLSDFIKPGKKFHDIVGSAYYVAPEVLKRRSGPESDVWSIGVITYILLCGRRPFWNKTEDGIFREVLRNKPDFRKKPWPGISSGAKDFVKKLLVKNPRARLTAAQALSHPWVREGGEASEIPVDISVLSNMRQFVKYSRFKQFALRALASTLKEEELADLKDQFDAIDVDKSGSISIEEMRHALAKDLPWRLKGPRVLEIIQAIDSNTDGLVDFEEFVAATLHIHQMAELDSERWGLRCQAAFSKFDLDGDGYITPDELRMVQHTGLKGSIEPLLEEADIDKDGRISLSEFRKLLRTASMSNLPSPRGPPNPQPL</sequence>
<proteinExistence type="evidence at transcript level"/>
<comment type="function">
    <text evidence="1">May play a role in signal transduction pathways that involve calcium as a second messenger.</text>
</comment>
<comment type="catalytic activity">
    <reaction evidence="9">
        <text>L-seryl-[protein] + ATP = O-phospho-L-seryl-[protein] + ADP + H(+)</text>
        <dbReference type="Rhea" id="RHEA:17989"/>
        <dbReference type="Rhea" id="RHEA-COMP:9863"/>
        <dbReference type="Rhea" id="RHEA-COMP:11604"/>
        <dbReference type="ChEBI" id="CHEBI:15378"/>
        <dbReference type="ChEBI" id="CHEBI:29999"/>
        <dbReference type="ChEBI" id="CHEBI:30616"/>
        <dbReference type="ChEBI" id="CHEBI:83421"/>
        <dbReference type="ChEBI" id="CHEBI:456216"/>
        <dbReference type="EC" id="2.7.11.1"/>
    </reaction>
</comment>
<comment type="catalytic activity">
    <reaction evidence="9">
        <text>L-threonyl-[protein] + ATP = O-phospho-L-threonyl-[protein] + ADP + H(+)</text>
        <dbReference type="Rhea" id="RHEA:46608"/>
        <dbReference type="Rhea" id="RHEA-COMP:11060"/>
        <dbReference type="Rhea" id="RHEA-COMP:11605"/>
        <dbReference type="ChEBI" id="CHEBI:15378"/>
        <dbReference type="ChEBI" id="CHEBI:30013"/>
        <dbReference type="ChEBI" id="CHEBI:30616"/>
        <dbReference type="ChEBI" id="CHEBI:61977"/>
        <dbReference type="ChEBI" id="CHEBI:456216"/>
        <dbReference type="EC" id="2.7.11.1"/>
    </reaction>
</comment>
<comment type="activity regulation">
    <text evidence="1">Activated by calcium. Autophosphorylation may play an important role in the regulation of the kinase activity.</text>
</comment>
<comment type="subcellular location">
    <subcellularLocation>
        <location evidence="9">Membrane</location>
        <topology evidence="9">Lipid-anchor</topology>
    </subcellularLocation>
</comment>
<comment type="alternative products">
    <event type="alternative splicing"/>
    <isoform>
        <id>Q6Z2M9-1</id>
        <name>1</name>
        <sequence type="displayed"/>
    </isoform>
    <isoform>
        <id>Q6Z2M9-2</id>
        <name>2</name>
        <sequence type="described" ref="VSP_058554"/>
    </isoform>
</comment>
<comment type="induction">
    <text evidence="6">By the mycorrhizal fungus G.intraradices colonization in roots.</text>
</comment>
<comment type="domain">
    <text evidence="1">There are 3 contiguous domains conserved in the CDPK subfamily: a kinase domain, an autoinhibitory (junction) domain and a calmodulin-like domain. The autoinhibitory domain (325-355) inactivates kinase activity under calcium-free conditions.</text>
</comment>
<comment type="similarity">
    <text evidence="9">Belongs to the protein kinase superfamily. Ser/Thr protein kinase family. CDPK subfamily.</text>
</comment>
<accession>Q6Z2M9</accession>
<accession>Q6Z2M8</accession>
<accession>Q9SE25</accession>
<organism>
    <name type="scientific">Oryza sativa subsp. japonica</name>
    <name type="common">Rice</name>
    <dbReference type="NCBI Taxonomy" id="39947"/>
    <lineage>
        <taxon>Eukaryota</taxon>
        <taxon>Viridiplantae</taxon>
        <taxon>Streptophyta</taxon>
        <taxon>Embryophyta</taxon>
        <taxon>Tracheophyta</taxon>
        <taxon>Spermatophyta</taxon>
        <taxon>Magnoliopsida</taxon>
        <taxon>Liliopsida</taxon>
        <taxon>Poales</taxon>
        <taxon>Poaceae</taxon>
        <taxon>BOP clade</taxon>
        <taxon>Oryzoideae</taxon>
        <taxon>Oryzeae</taxon>
        <taxon>Oryzinae</taxon>
        <taxon>Oryza</taxon>
        <taxon>Oryza sativa</taxon>
    </lineage>
</organism>
<gene>
    <name evidence="7" type="primary">CPK4</name>
    <name evidence="8" type="synonym">CDPK1</name>
    <name evidence="12" type="ordered locus">Os02g0126400</name>
    <name evidence="9" type="ordered locus">LOC_Os02g03410</name>
    <name evidence="10" type="ORF">P0482F12.15-1</name>
    <name evidence="11" type="ORF">P0482F12.15-2</name>
</gene>
<feature type="initiator methionine" description="Removed" evidence="2">
    <location>
        <position position="1"/>
    </location>
</feature>
<feature type="chain" id="PRO_0000437549" description="Calcium-dependent protein kinase 4">
    <location>
        <begin position="2"/>
        <end position="522"/>
    </location>
</feature>
<feature type="domain" description="Protein kinase" evidence="3">
    <location>
        <begin position="59"/>
        <end position="319"/>
    </location>
</feature>
<feature type="domain" description="EF-hand 1" evidence="4">
    <location>
        <begin position="362"/>
        <end position="397"/>
    </location>
</feature>
<feature type="domain" description="EF-hand 2" evidence="4">
    <location>
        <begin position="399"/>
        <end position="434"/>
    </location>
</feature>
<feature type="domain" description="EF-hand 3" evidence="4">
    <location>
        <begin position="441"/>
        <end position="476"/>
    </location>
</feature>
<feature type="domain" description="EF-hand 4" evidence="4">
    <location>
        <begin position="481"/>
        <end position="508"/>
    </location>
</feature>
<feature type="region of interest" description="Disordered" evidence="5">
    <location>
        <begin position="1"/>
        <end position="43"/>
    </location>
</feature>
<feature type="region of interest" description="Autoinhibitory domain" evidence="1">
    <location>
        <begin position="325"/>
        <end position="355"/>
    </location>
</feature>
<feature type="compositionally biased region" description="Polar residues" evidence="5">
    <location>
        <begin position="1"/>
        <end position="10"/>
    </location>
</feature>
<feature type="compositionally biased region" description="Basic and acidic residues" evidence="5">
    <location>
        <begin position="29"/>
        <end position="43"/>
    </location>
</feature>
<feature type="active site" description="Proton acceptor" evidence="3">
    <location>
        <position position="185"/>
    </location>
</feature>
<feature type="binding site" evidence="3">
    <location>
        <begin position="65"/>
        <end position="73"/>
    </location>
    <ligand>
        <name>ATP</name>
        <dbReference type="ChEBI" id="CHEBI:30616"/>
    </ligand>
</feature>
<feature type="binding site" evidence="3">
    <location>
        <position position="88"/>
    </location>
    <ligand>
        <name>ATP</name>
        <dbReference type="ChEBI" id="CHEBI:30616"/>
    </ligand>
</feature>
<feature type="binding site" evidence="4">
    <location>
        <position position="375"/>
    </location>
    <ligand>
        <name>Ca(2+)</name>
        <dbReference type="ChEBI" id="CHEBI:29108"/>
        <label>1</label>
    </ligand>
</feature>
<feature type="binding site" evidence="4">
    <location>
        <position position="377"/>
    </location>
    <ligand>
        <name>Ca(2+)</name>
        <dbReference type="ChEBI" id="CHEBI:29108"/>
        <label>1</label>
    </ligand>
</feature>
<feature type="binding site" evidence="4">
    <location>
        <position position="379"/>
    </location>
    <ligand>
        <name>Ca(2+)</name>
        <dbReference type="ChEBI" id="CHEBI:29108"/>
        <label>1</label>
    </ligand>
</feature>
<feature type="binding site" evidence="4">
    <location>
        <position position="381"/>
    </location>
    <ligand>
        <name>Ca(2+)</name>
        <dbReference type="ChEBI" id="CHEBI:29108"/>
        <label>1</label>
    </ligand>
</feature>
<feature type="binding site" evidence="4">
    <location>
        <position position="386"/>
    </location>
    <ligand>
        <name>Ca(2+)</name>
        <dbReference type="ChEBI" id="CHEBI:29108"/>
        <label>1</label>
    </ligand>
</feature>
<feature type="binding site" evidence="4">
    <location>
        <position position="412"/>
    </location>
    <ligand>
        <name>Ca(2+)</name>
        <dbReference type="ChEBI" id="CHEBI:29108"/>
        <label>2</label>
    </ligand>
</feature>
<feature type="binding site" evidence="4">
    <location>
        <position position="414"/>
    </location>
    <ligand>
        <name>Ca(2+)</name>
        <dbReference type="ChEBI" id="CHEBI:29108"/>
        <label>2</label>
    </ligand>
</feature>
<feature type="binding site" evidence="4">
    <location>
        <position position="416"/>
    </location>
    <ligand>
        <name>Ca(2+)</name>
        <dbReference type="ChEBI" id="CHEBI:29108"/>
        <label>2</label>
    </ligand>
</feature>
<feature type="binding site" evidence="4">
    <location>
        <position position="423"/>
    </location>
    <ligand>
        <name>Ca(2+)</name>
        <dbReference type="ChEBI" id="CHEBI:29108"/>
        <label>2</label>
    </ligand>
</feature>
<feature type="binding site" evidence="4">
    <location>
        <position position="454"/>
    </location>
    <ligand>
        <name>Ca(2+)</name>
        <dbReference type="ChEBI" id="CHEBI:29108"/>
        <label>3</label>
    </ligand>
</feature>
<feature type="binding site" evidence="4">
    <location>
        <position position="456"/>
    </location>
    <ligand>
        <name>Ca(2+)</name>
        <dbReference type="ChEBI" id="CHEBI:29108"/>
        <label>3</label>
    </ligand>
</feature>
<feature type="binding site" evidence="4">
    <location>
        <position position="458"/>
    </location>
    <ligand>
        <name>Ca(2+)</name>
        <dbReference type="ChEBI" id="CHEBI:29108"/>
        <label>3</label>
    </ligand>
</feature>
<feature type="binding site" evidence="4">
    <location>
        <position position="460"/>
    </location>
    <ligand>
        <name>Ca(2+)</name>
        <dbReference type="ChEBI" id="CHEBI:29108"/>
        <label>3</label>
    </ligand>
</feature>
<feature type="binding site" evidence="4">
    <location>
        <position position="465"/>
    </location>
    <ligand>
        <name>Ca(2+)</name>
        <dbReference type="ChEBI" id="CHEBI:29108"/>
        <label>3</label>
    </ligand>
</feature>
<feature type="binding site" evidence="4">
    <location>
        <position position="486"/>
    </location>
    <ligand>
        <name>Ca(2+)</name>
        <dbReference type="ChEBI" id="CHEBI:29108"/>
        <label>4</label>
    </ligand>
</feature>
<feature type="binding site" evidence="4">
    <location>
        <position position="488"/>
    </location>
    <ligand>
        <name>Ca(2+)</name>
        <dbReference type="ChEBI" id="CHEBI:29108"/>
        <label>4</label>
    </ligand>
</feature>
<feature type="binding site" evidence="4">
    <location>
        <position position="490"/>
    </location>
    <ligand>
        <name>Ca(2+)</name>
        <dbReference type="ChEBI" id="CHEBI:29108"/>
        <label>4</label>
    </ligand>
</feature>
<feature type="binding site" evidence="4">
    <location>
        <position position="492"/>
    </location>
    <ligand>
        <name>Ca(2+)</name>
        <dbReference type="ChEBI" id="CHEBI:29108"/>
        <label>4</label>
    </ligand>
</feature>
<feature type="binding site" evidence="4">
    <location>
        <position position="497"/>
    </location>
    <ligand>
        <name>Ca(2+)</name>
        <dbReference type="ChEBI" id="CHEBI:29108"/>
        <label>4</label>
    </ligand>
</feature>
<feature type="lipid moiety-binding region" description="N-myristoyl glycine" evidence="2">
    <location>
        <position position="2"/>
    </location>
</feature>
<feature type="splice variant" id="VSP_058554" description="In isoform 2.">
    <location>
        <begin position="469"/>
        <end position="470"/>
    </location>
</feature>
<feature type="sequence conflict" description="In Ref. 1; AAF23900." evidence="9" ref="1">
    <original>E</original>
    <variation>Q</variation>
    <location>
        <position position="52"/>
    </location>
</feature>
<feature type="sequence conflict" description="In Ref. 1; AAF23900." evidence="9" ref="1">
    <original>W</original>
    <variation>G</variation>
    <location>
        <position position="442"/>
    </location>
</feature>
<feature type="sequence conflict" description="In Ref. 1; AAF23900." evidence="9" ref="1">
    <original>SPRGPPNPQPL</original>
    <variation>VQEDLQIHNPCERR</variation>
    <location>
        <begin position="512"/>
        <end position="522"/>
    </location>
</feature>
<dbReference type="EC" id="2.7.11.1" evidence="9"/>
<dbReference type="EMBL" id="AF194413">
    <property type="protein sequence ID" value="AAF23900.1"/>
    <property type="molecule type" value="mRNA"/>
</dbReference>
<dbReference type="EMBL" id="AP005311">
    <property type="protein sequence ID" value="BAD08015.1"/>
    <property type="molecule type" value="Genomic_DNA"/>
</dbReference>
<dbReference type="EMBL" id="AP005311">
    <property type="protein sequence ID" value="BAD08016.1"/>
    <property type="molecule type" value="Genomic_DNA"/>
</dbReference>
<dbReference type="EMBL" id="AP008208">
    <property type="protein sequence ID" value="BAF07665.1"/>
    <property type="molecule type" value="Genomic_DNA"/>
</dbReference>
<dbReference type="EMBL" id="AP014958">
    <property type="protein sequence ID" value="BAS76768.1"/>
    <property type="molecule type" value="Genomic_DNA"/>
</dbReference>
<dbReference type="EMBL" id="AP014958">
    <property type="protein sequence ID" value="BAS76769.1"/>
    <property type="molecule type" value="Genomic_DNA"/>
</dbReference>
<dbReference type="EMBL" id="AK060738">
    <property type="protein sequence ID" value="BAG87555.1"/>
    <property type="molecule type" value="mRNA"/>
</dbReference>
<dbReference type="RefSeq" id="XP_015625883.1">
    <property type="nucleotide sequence ID" value="XM_015770397.1"/>
</dbReference>
<dbReference type="RefSeq" id="XP_015625884.1">
    <property type="nucleotide sequence ID" value="XM_015770398.1"/>
</dbReference>
<dbReference type="SMR" id="Q6Z2M9"/>
<dbReference type="FunCoup" id="Q6Z2M9">
    <property type="interactions" value="175"/>
</dbReference>
<dbReference type="STRING" id="39947.Q6Z2M9"/>
<dbReference type="PaxDb" id="39947-Q6Z2M9"/>
<dbReference type="EnsemblPlants" id="Os02t0126400-01">
    <molecule id="Q6Z2M9-1"/>
    <property type="protein sequence ID" value="Os02t0126400-01"/>
    <property type="gene ID" value="Os02g0126400"/>
</dbReference>
<dbReference type="Gramene" id="Os02t0126400-01">
    <molecule id="Q6Z2M9-1"/>
    <property type="protein sequence ID" value="Os02t0126400-01"/>
    <property type="gene ID" value="Os02g0126400"/>
</dbReference>
<dbReference type="KEGG" id="dosa:Os02g0126400"/>
<dbReference type="eggNOG" id="KOG0032">
    <property type="taxonomic scope" value="Eukaryota"/>
</dbReference>
<dbReference type="HOGENOM" id="CLU_000288_37_3_1"/>
<dbReference type="InParanoid" id="Q6Z2M9"/>
<dbReference type="OMA" id="WFAMHAP"/>
<dbReference type="OrthoDB" id="40902at2759"/>
<dbReference type="Proteomes" id="UP000000763">
    <property type="component" value="Chromosome 2"/>
</dbReference>
<dbReference type="Proteomes" id="UP000059680">
    <property type="component" value="Chromosome 2"/>
</dbReference>
<dbReference type="GO" id="GO:0005737">
    <property type="term" value="C:cytoplasm"/>
    <property type="evidence" value="ECO:0000318"/>
    <property type="project" value="GO_Central"/>
</dbReference>
<dbReference type="GO" id="GO:0016020">
    <property type="term" value="C:membrane"/>
    <property type="evidence" value="ECO:0007669"/>
    <property type="project" value="UniProtKB-SubCell"/>
</dbReference>
<dbReference type="GO" id="GO:0005634">
    <property type="term" value="C:nucleus"/>
    <property type="evidence" value="ECO:0000318"/>
    <property type="project" value="GO_Central"/>
</dbReference>
<dbReference type="GO" id="GO:0005524">
    <property type="term" value="F:ATP binding"/>
    <property type="evidence" value="ECO:0007669"/>
    <property type="project" value="UniProtKB-KW"/>
</dbReference>
<dbReference type="GO" id="GO:0005509">
    <property type="term" value="F:calcium ion binding"/>
    <property type="evidence" value="ECO:0007669"/>
    <property type="project" value="InterPro"/>
</dbReference>
<dbReference type="GO" id="GO:0009931">
    <property type="term" value="F:calcium-dependent protein serine/threonine kinase activity"/>
    <property type="evidence" value="ECO:0000318"/>
    <property type="project" value="GO_Central"/>
</dbReference>
<dbReference type="GO" id="GO:0004683">
    <property type="term" value="F:calcium/calmodulin-dependent protein kinase activity"/>
    <property type="evidence" value="ECO:0000318"/>
    <property type="project" value="GO_Central"/>
</dbReference>
<dbReference type="GO" id="GO:0005516">
    <property type="term" value="F:calmodulin binding"/>
    <property type="evidence" value="ECO:0000318"/>
    <property type="project" value="GO_Central"/>
</dbReference>
<dbReference type="GO" id="GO:0106310">
    <property type="term" value="F:protein serine kinase activity"/>
    <property type="evidence" value="ECO:0007669"/>
    <property type="project" value="RHEA"/>
</dbReference>
<dbReference type="GO" id="GO:0035556">
    <property type="term" value="P:intracellular signal transduction"/>
    <property type="evidence" value="ECO:0000318"/>
    <property type="project" value="GO_Central"/>
</dbReference>
<dbReference type="CDD" id="cd05117">
    <property type="entry name" value="STKc_CAMK"/>
    <property type="match status" value="1"/>
</dbReference>
<dbReference type="FunFam" id="1.10.238.10:FF:000432">
    <property type="entry name" value="Calcium-dependent protein kinase 18"/>
    <property type="match status" value="1"/>
</dbReference>
<dbReference type="FunFam" id="1.10.510.10:FF:000225">
    <property type="entry name" value="calcium-dependent protein kinase 28-like"/>
    <property type="match status" value="1"/>
</dbReference>
<dbReference type="FunFam" id="3.30.200.20:FF:000101">
    <property type="entry name" value="CDPK-related kinase 1"/>
    <property type="match status" value="1"/>
</dbReference>
<dbReference type="Gene3D" id="1.10.238.10">
    <property type="entry name" value="EF-hand"/>
    <property type="match status" value="1"/>
</dbReference>
<dbReference type="Gene3D" id="3.30.200.20">
    <property type="entry name" value="Phosphorylase Kinase, domain 1"/>
    <property type="match status" value="1"/>
</dbReference>
<dbReference type="Gene3D" id="1.10.510.10">
    <property type="entry name" value="Transferase(Phosphotransferase) domain 1"/>
    <property type="match status" value="1"/>
</dbReference>
<dbReference type="InterPro" id="IPR050205">
    <property type="entry name" value="CDPK_Ser/Thr_kinases"/>
</dbReference>
<dbReference type="InterPro" id="IPR011992">
    <property type="entry name" value="EF-hand-dom_pair"/>
</dbReference>
<dbReference type="InterPro" id="IPR018247">
    <property type="entry name" value="EF_Hand_1_Ca_BS"/>
</dbReference>
<dbReference type="InterPro" id="IPR002048">
    <property type="entry name" value="EF_hand_dom"/>
</dbReference>
<dbReference type="InterPro" id="IPR011009">
    <property type="entry name" value="Kinase-like_dom_sf"/>
</dbReference>
<dbReference type="InterPro" id="IPR000719">
    <property type="entry name" value="Prot_kinase_dom"/>
</dbReference>
<dbReference type="InterPro" id="IPR017441">
    <property type="entry name" value="Protein_kinase_ATP_BS"/>
</dbReference>
<dbReference type="InterPro" id="IPR008271">
    <property type="entry name" value="Ser/Thr_kinase_AS"/>
</dbReference>
<dbReference type="PANTHER" id="PTHR24349">
    <property type="entry name" value="SERINE/THREONINE-PROTEIN KINASE"/>
    <property type="match status" value="1"/>
</dbReference>
<dbReference type="Pfam" id="PF13499">
    <property type="entry name" value="EF-hand_7"/>
    <property type="match status" value="2"/>
</dbReference>
<dbReference type="Pfam" id="PF00069">
    <property type="entry name" value="Pkinase"/>
    <property type="match status" value="1"/>
</dbReference>
<dbReference type="SMART" id="SM00054">
    <property type="entry name" value="EFh"/>
    <property type="match status" value="4"/>
</dbReference>
<dbReference type="SMART" id="SM00220">
    <property type="entry name" value="S_TKc"/>
    <property type="match status" value="1"/>
</dbReference>
<dbReference type="SUPFAM" id="SSF47473">
    <property type="entry name" value="EF-hand"/>
    <property type="match status" value="1"/>
</dbReference>
<dbReference type="SUPFAM" id="SSF56112">
    <property type="entry name" value="Protein kinase-like (PK-like)"/>
    <property type="match status" value="1"/>
</dbReference>
<dbReference type="PROSITE" id="PS00018">
    <property type="entry name" value="EF_HAND_1"/>
    <property type="match status" value="4"/>
</dbReference>
<dbReference type="PROSITE" id="PS50222">
    <property type="entry name" value="EF_HAND_2"/>
    <property type="match status" value="4"/>
</dbReference>
<dbReference type="PROSITE" id="PS00107">
    <property type="entry name" value="PROTEIN_KINASE_ATP"/>
    <property type="match status" value="1"/>
</dbReference>
<dbReference type="PROSITE" id="PS50011">
    <property type="entry name" value="PROTEIN_KINASE_DOM"/>
    <property type="match status" value="1"/>
</dbReference>
<dbReference type="PROSITE" id="PS00108">
    <property type="entry name" value="PROTEIN_KINASE_ST"/>
    <property type="match status" value="1"/>
</dbReference>
<reference key="1">
    <citation type="submission" date="1999-10" db="EMBL/GenBank/DDBJ databases">
        <title>Isolation of calcium-dependent protein kinases from rice.</title>
        <authorList>
            <person name="Cheong Y.H."/>
            <person name="Moon B.C."/>
            <person name="Cho M.J."/>
        </authorList>
    </citation>
    <scope>NUCLEOTIDE SEQUENCE [MRNA] (ISOFORM 2)</scope>
</reference>
<reference key="2">
    <citation type="journal article" date="2005" name="Nature">
        <title>The map-based sequence of the rice genome.</title>
        <authorList>
            <consortium name="International rice genome sequencing project (IRGSP)"/>
        </authorList>
    </citation>
    <scope>NUCLEOTIDE SEQUENCE [LARGE SCALE GENOMIC DNA]</scope>
    <source>
        <strain>cv. Nipponbare</strain>
    </source>
</reference>
<reference key="3">
    <citation type="journal article" date="2008" name="Nucleic Acids Res.">
        <title>The rice annotation project database (RAP-DB): 2008 update.</title>
        <authorList>
            <consortium name="The rice annotation project (RAP)"/>
        </authorList>
    </citation>
    <scope>GENOME REANNOTATION</scope>
    <source>
        <strain>cv. Nipponbare</strain>
    </source>
</reference>
<reference key="4">
    <citation type="journal article" date="2013" name="Rice">
        <title>Improvement of the Oryza sativa Nipponbare reference genome using next generation sequence and optical map data.</title>
        <authorList>
            <person name="Kawahara Y."/>
            <person name="de la Bastide M."/>
            <person name="Hamilton J.P."/>
            <person name="Kanamori H."/>
            <person name="McCombie W.R."/>
            <person name="Ouyang S."/>
            <person name="Schwartz D.C."/>
            <person name="Tanaka T."/>
            <person name="Wu J."/>
            <person name="Zhou S."/>
            <person name="Childs K.L."/>
            <person name="Davidson R.M."/>
            <person name="Lin H."/>
            <person name="Quesada-Ocampo L."/>
            <person name="Vaillancourt B."/>
            <person name="Sakai H."/>
            <person name="Lee S.S."/>
            <person name="Kim J."/>
            <person name="Numa H."/>
            <person name="Itoh T."/>
            <person name="Buell C.R."/>
            <person name="Matsumoto T."/>
        </authorList>
    </citation>
    <scope>GENOME REANNOTATION</scope>
    <source>
        <strain>cv. Nipponbare</strain>
    </source>
</reference>
<reference key="5">
    <citation type="journal article" date="2003" name="Science">
        <title>Collection, mapping, and annotation of over 28,000 cDNA clones from japonica rice.</title>
        <authorList>
            <consortium name="The rice full-length cDNA consortium"/>
        </authorList>
    </citation>
    <scope>NUCLEOTIDE SEQUENCE [LARGE SCALE MRNA] (ISOFORM 1)</scope>
    <source>
        <strain>cv. Nipponbare</strain>
    </source>
</reference>
<reference key="6">
    <citation type="journal article" date="2005" name="Plant Cell Physiol.">
        <title>Genome-wide identification of the rice calcium-dependent protein kinase and its closely related kinase gene families: comprehensive analysis of the CDPKs gene family in rice.</title>
        <authorList>
            <person name="Asano T."/>
            <person name="Tanaka N."/>
            <person name="Yang G."/>
            <person name="Hayashi N."/>
            <person name="Komatsu S."/>
        </authorList>
    </citation>
    <scope>GENE FAMILY</scope>
    <scope>NOMENCLATURE</scope>
</reference>
<reference key="7">
    <citation type="journal article" date="2011" name="BMC Plant Biol.">
        <title>A rice calcium-dependent protein kinase is expressed in cortical root cells during the presymbiotic phase of the arbuscular mycorrhizal symbiosis.</title>
        <authorList>
            <person name="Campos-Soriano L."/>
            <person name="Gomez-Ariza J."/>
            <person name="Bonfante P."/>
            <person name="San Segundo B."/>
        </authorList>
    </citation>
    <scope>INDUCTION BY GLOMUS INTRARADICES</scope>
</reference>
<protein>
    <recommendedName>
        <fullName evidence="9">Calcium-dependent protein kinase 4</fullName>
        <shortName evidence="9">OsCDPK4</shortName>
        <shortName evidence="7">OsCPK4</shortName>
        <ecNumber evidence="9">2.7.11.1</ecNumber>
    </recommendedName>
    <alternativeName>
        <fullName evidence="8">Calcium-dependent protein kinase OsCDPK1</fullName>
    </alternativeName>
</protein>
<evidence type="ECO:0000250" key="1">
    <source>
        <dbReference type="UniProtKB" id="Q06850"/>
    </source>
</evidence>
<evidence type="ECO:0000255" key="2"/>
<evidence type="ECO:0000255" key="3">
    <source>
        <dbReference type="PROSITE-ProRule" id="PRU00159"/>
    </source>
</evidence>
<evidence type="ECO:0000255" key="4">
    <source>
        <dbReference type="PROSITE-ProRule" id="PRU00448"/>
    </source>
</evidence>
<evidence type="ECO:0000256" key="5">
    <source>
        <dbReference type="SAM" id="MobiDB-lite"/>
    </source>
</evidence>
<evidence type="ECO:0000269" key="6">
    <source>
    </source>
</evidence>
<evidence type="ECO:0000303" key="7">
    <source>
    </source>
</evidence>
<evidence type="ECO:0000303" key="8">
    <source ref="1"/>
</evidence>
<evidence type="ECO:0000305" key="9"/>
<evidence type="ECO:0000312" key="10">
    <source>
        <dbReference type="EMBL" id="BAD08015.1"/>
    </source>
</evidence>
<evidence type="ECO:0000312" key="11">
    <source>
        <dbReference type="EMBL" id="BAD08016.1"/>
    </source>
</evidence>
<evidence type="ECO:0000312" key="12">
    <source>
        <dbReference type="EMBL" id="BAF07665.1"/>
    </source>
</evidence>